<dbReference type="EMBL" id="AK012312">
    <property type="protein sequence ID" value="BAB28158.1"/>
    <property type="molecule type" value="mRNA"/>
</dbReference>
<dbReference type="EMBL" id="AK018787">
    <property type="protein sequence ID" value="BAB31410.1"/>
    <property type="molecule type" value="mRNA"/>
</dbReference>
<dbReference type="EMBL" id="AK044291">
    <property type="protein sequence ID" value="BAC31858.1"/>
    <property type="molecule type" value="mRNA"/>
</dbReference>
<dbReference type="EMBL" id="AK048044">
    <property type="protein sequence ID" value="BAC33220.1"/>
    <property type="molecule type" value="mRNA"/>
</dbReference>
<dbReference type="EMBL" id="AK078468">
    <property type="protein sequence ID" value="BAC37289.1"/>
    <property type="molecule type" value="mRNA"/>
</dbReference>
<dbReference type="EMBL" id="AK079556">
    <property type="protein sequence ID" value="BAE43368.1"/>
    <property type="molecule type" value="mRNA"/>
</dbReference>
<dbReference type="EMBL" id="AK165398">
    <property type="protein sequence ID" value="BAE38162.1"/>
    <property type="molecule type" value="mRNA"/>
</dbReference>
<dbReference type="EMBL" id="BC031761">
    <property type="protein sequence ID" value="AAH31761.1"/>
    <property type="molecule type" value="mRNA"/>
</dbReference>
<dbReference type="CCDS" id="CCDS29729.1">
    <molecule id="Q9CZP7-1"/>
</dbReference>
<dbReference type="CCDS" id="CCDS89371.1">
    <molecule id="Q9CZP7-2"/>
</dbReference>
<dbReference type="CCDS" id="CCDS89372.1">
    <molecule id="Q9CZP7-4"/>
</dbReference>
<dbReference type="RefSeq" id="NP_001289309.1">
    <molecule id="Q9CZP7-4"/>
    <property type="nucleotide sequence ID" value="NM_001302380.2"/>
</dbReference>
<dbReference type="RefSeq" id="NP_001289311.1">
    <molecule id="Q9CZP7-2"/>
    <property type="nucleotide sequence ID" value="NM_001302382.2"/>
</dbReference>
<dbReference type="RefSeq" id="NP_001289372.1">
    <property type="nucleotide sequence ID" value="NM_001302443.1"/>
</dbReference>
<dbReference type="RefSeq" id="NP_080226.1">
    <molecule id="Q9CZP7-1"/>
    <property type="nucleotide sequence ID" value="NM_025950.4"/>
</dbReference>
<dbReference type="SMR" id="Q9CZP7"/>
<dbReference type="BioGRID" id="211919">
    <property type="interactions" value="10"/>
</dbReference>
<dbReference type="FunCoup" id="Q9CZP7">
    <property type="interactions" value="1633"/>
</dbReference>
<dbReference type="STRING" id="10090.ENSMUSP00000060421"/>
<dbReference type="GlyGen" id="Q9CZP7">
    <property type="glycosylation" value="1 site, 1 O-linked glycan (1 site)"/>
</dbReference>
<dbReference type="iPTMnet" id="Q9CZP7"/>
<dbReference type="PhosphoSitePlus" id="Q9CZP7"/>
<dbReference type="PaxDb" id="10090-ENSMUSP00000060421"/>
<dbReference type="PeptideAtlas" id="Q9CZP7"/>
<dbReference type="ProteomicsDB" id="280019">
    <molecule id="Q9CZP7-1"/>
</dbReference>
<dbReference type="ProteomicsDB" id="280020">
    <molecule id="Q9CZP7-2"/>
</dbReference>
<dbReference type="ProteomicsDB" id="280021">
    <molecule id="Q9CZP7-3"/>
</dbReference>
<dbReference type="ProteomicsDB" id="280022">
    <molecule id="Q9CZP7-4"/>
</dbReference>
<dbReference type="Pumba" id="Q9CZP7"/>
<dbReference type="Antibodypedia" id="24046">
    <property type="antibodies" value="198 antibodies from 29 providers"/>
</dbReference>
<dbReference type="DNASU" id="67072"/>
<dbReference type="Ensembl" id="ENSMUST00000050148.5">
    <molecule id="Q9CZP7-1"/>
    <property type="protein sequence ID" value="ENSMUSP00000060421.4"/>
    <property type="gene ID" value="ENSMUSG00000024780.8"/>
</dbReference>
<dbReference type="Ensembl" id="ENSMUST00000224511.2">
    <molecule id="Q9CZP7-4"/>
    <property type="protein sequence ID" value="ENSMUSP00000152985.2"/>
    <property type="gene ID" value="ENSMUSG00000024780.8"/>
</dbReference>
<dbReference type="Ensembl" id="ENSMUST00000225210.2">
    <molecule id="Q9CZP7-3"/>
    <property type="protein sequence ID" value="ENSMUSP00000153424.2"/>
    <property type="gene ID" value="ENSMUSG00000024780.8"/>
</dbReference>
<dbReference type="Ensembl" id="ENSMUST00000225310.2">
    <molecule id="Q9CZP7-2"/>
    <property type="protein sequence ID" value="ENSMUSP00000153192.2"/>
    <property type="gene ID" value="ENSMUSG00000024780.8"/>
</dbReference>
<dbReference type="GeneID" id="67072"/>
<dbReference type="KEGG" id="mmu:67072"/>
<dbReference type="UCSC" id="uc008hcs.2">
    <molecule id="Q9CZP7-1"/>
    <property type="organism name" value="mouse"/>
</dbReference>
<dbReference type="UCSC" id="uc008hct.2">
    <molecule id="Q9CZP7-3"/>
    <property type="organism name" value="mouse"/>
</dbReference>
<dbReference type="UCSC" id="uc008hcu.2">
    <molecule id="Q9CZP7-2"/>
    <property type="organism name" value="mouse"/>
</dbReference>
<dbReference type="UCSC" id="uc008hcw.2">
    <molecule id="Q9CZP7-4"/>
    <property type="organism name" value="mouse"/>
</dbReference>
<dbReference type="AGR" id="MGI:1914322"/>
<dbReference type="CTD" id="55664"/>
<dbReference type="MGI" id="MGI:1914322">
    <property type="gene designation" value="Cdc37l1"/>
</dbReference>
<dbReference type="VEuPathDB" id="HostDB:ENSMUSG00000024780"/>
<dbReference type="eggNOG" id="KOG2260">
    <property type="taxonomic scope" value="Eukaryota"/>
</dbReference>
<dbReference type="GeneTree" id="ENSGT00390000013443"/>
<dbReference type="HOGENOM" id="CLU_046495_1_0_1"/>
<dbReference type="InParanoid" id="Q9CZP7"/>
<dbReference type="OMA" id="YAAKCRN"/>
<dbReference type="OrthoDB" id="440202at2759"/>
<dbReference type="PhylomeDB" id="Q9CZP7"/>
<dbReference type="TreeFam" id="TF101059"/>
<dbReference type="Reactome" id="R-MMU-114608">
    <property type="pathway name" value="Platelet degranulation"/>
</dbReference>
<dbReference type="BioGRID-ORCS" id="67072">
    <property type="hits" value="4 hits in 76 CRISPR screens"/>
</dbReference>
<dbReference type="ChiTaRS" id="Cdc37l1">
    <property type="organism name" value="mouse"/>
</dbReference>
<dbReference type="PRO" id="PR:Q9CZP7"/>
<dbReference type="Proteomes" id="UP000000589">
    <property type="component" value="Chromosome 19"/>
</dbReference>
<dbReference type="RNAct" id="Q9CZP7">
    <property type="molecule type" value="protein"/>
</dbReference>
<dbReference type="Bgee" id="ENSMUSG00000024780">
    <property type="expression patterns" value="Expressed in interventricular septum and 251 other cell types or tissues"/>
</dbReference>
<dbReference type="ExpressionAtlas" id="Q9CZP7">
    <property type="expression patterns" value="baseline and differential"/>
</dbReference>
<dbReference type="GO" id="GO:0005737">
    <property type="term" value="C:cytoplasm"/>
    <property type="evidence" value="ECO:0000314"/>
    <property type="project" value="MGI"/>
</dbReference>
<dbReference type="GO" id="GO:0005829">
    <property type="term" value="C:cytosol"/>
    <property type="evidence" value="ECO:0007669"/>
    <property type="project" value="Ensembl"/>
</dbReference>
<dbReference type="FunFam" id="1.20.58.610:FF:000001">
    <property type="entry name" value="Hsp90 co-chaperone Cdc37-like 1"/>
    <property type="match status" value="1"/>
</dbReference>
<dbReference type="Gene3D" id="1.20.58.610">
    <property type="entry name" value="Cdc37, Hsp90 binding domain"/>
    <property type="match status" value="1"/>
</dbReference>
<dbReference type="InterPro" id="IPR004918">
    <property type="entry name" value="Cdc37"/>
</dbReference>
<dbReference type="InterPro" id="IPR013874">
    <property type="entry name" value="Cdc37_Hsp90-bd"/>
</dbReference>
<dbReference type="InterPro" id="IPR038189">
    <property type="entry name" value="Cdc37_Hsp90-bd_sf"/>
</dbReference>
<dbReference type="PANTHER" id="PTHR12800">
    <property type="entry name" value="CDC37-RELATED"/>
    <property type="match status" value="1"/>
</dbReference>
<dbReference type="PANTHER" id="PTHR12800:SF2">
    <property type="entry name" value="HSP90 CO-CHAPERONE CDC37-LIKE 1"/>
    <property type="match status" value="1"/>
</dbReference>
<dbReference type="Pfam" id="PF08565">
    <property type="entry name" value="CDC37_M"/>
    <property type="match status" value="1"/>
</dbReference>
<dbReference type="SMART" id="SM01070">
    <property type="entry name" value="CDC37_M"/>
    <property type="match status" value="1"/>
</dbReference>
<dbReference type="SUPFAM" id="SSF101391">
    <property type="entry name" value="Hsp90 co-chaperone CDC37"/>
    <property type="match status" value="1"/>
</dbReference>
<gene>
    <name type="primary">Cdc37l1</name>
</gene>
<proteinExistence type="evidence at protein level"/>
<feature type="chain" id="PRO_0000318522" description="Hsp90 co-chaperone Cdc37-like 1">
    <location>
        <begin position="1"/>
        <end position="335"/>
    </location>
</feature>
<feature type="region of interest" description="Disordered" evidence="4">
    <location>
        <begin position="1"/>
        <end position="42"/>
    </location>
</feature>
<feature type="region of interest" description="Self-association" evidence="1">
    <location>
        <begin position="2"/>
        <end position="170"/>
    </location>
</feature>
<feature type="region of interest" description="Self-association and interaction with Hsp90" evidence="1">
    <location>
        <begin position="147"/>
        <end position="276"/>
    </location>
</feature>
<feature type="region of interest" description="Interaction with Hsp70" evidence="1">
    <location>
        <begin position="266"/>
        <end position="335"/>
    </location>
</feature>
<feature type="region of interest" description="Required for interaction with STIP1" evidence="1">
    <location>
        <begin position="277"/>
        <end position="335"/>
    </location>
</feature>
<feature type="coiled-coil region" evidence="3">
    <location>
        <begin position="84"/>
        <end position="120"/>
    </location>
</feature>
<feature type="compositionally biased region" description="Pro residues" evidence="4">
    <location>
        <begin position="1"/>
        <end position="11"/>
    </location>
</feature>
<feature type="compositionally biased region" description="Low complexity" evidence="4">
    <location>
        <begin position="27"/>
        <end position="40"/>
    </location>
</feature>
<feature type="modified residue" description="Phosphoserine" evidence="2">
    <location>
        <position position="32"/>
    </location>
</feature>
<feature type="modified residue" description="Phosphoserine" evidence="2">
    <location>
        <position position="88"/>
    </location>
</feature>
<feature type="splice variant" id="VSP_031213" description="In isoform 4." evidence="5">
    <original>NPDSLQCCT</original>
    <variation>FSFLEAHRN</variation>
    <location>
        <begin position="304"/>
        <end position="312"/>
    </location>
</feature>
<feature type="splice variant" id="VSP_031214" description="In isoform 3." evidence="5">
    <original>NPDSLQC</original>
    <variation>VSWKRGY</variation>
    <location>
        <begin position="304"/>
        <end position="310"/>
    </location>
</feature>
<feature type="splice variant" id="VSP_031215" description="In isoform 2." evidence="5">
    <original>NPDS</original>
    <variation>APRF</variation>
    <location>
        <begin position="304"/>
        <end position="307"/>
    </location>
</feature>
<feature type="splice variant" id="VSP_031216" description="In isoform 2." evidence="5">
    <location>
        <begin position="308"/>
        <end position="335"/>
    </location>
</feature>
<feature type="splice variant" id="VSP_031217" description="In isoform 3." evidence="5">
    <location>
        <begin position="311"/>
        <end position="335"/>
    </location>
</feature>
<feature type="splice variant" id="VSP_031218" description="In isoform 4." evidence="5">
    <location>
        <begin position="313"/>
        <end position="335"/>
    </location>
</feature>
<feature type="sequence conflict" description="In Ref. 1; BAB31410." evidence="6" ref="1">
    <original>D</original>
    <variation>G</variation>
    <location>
        <position position="144"/>
    </location>
</feature>
<name>CD37L_MOUSE</name>
<protein>
    <recommendedName>
        <fullName>Hsp90 co-chaperone Cdc37-like 1</fullName>
    </recommendedName>
</protein>
<comment type="function">
    <text evidence="1">Co-chaperone that binds to numerous proteins and promotes their interaction with Hsp70 and Hsp90.</text>
</comment>
<comment type="subunit">
    <text evidence="1">Self-associates. Forms complexes with Hsp70 and Hsp90. Interacts with CDC37, FKBP4, PPID and STIP1.</text>
</comment>
<comment type="subcellular location">
    <subcellularLocation>
        <location evidence="1">Cytoplasm</location>
    </subcellularLocation>
</comment>
<comment type="alternative products">
    <event type="alternative splicing"/>
    <isoform>
        <id>Q9CZP7-1</id>
        <name>1</name>
        <sequence type="displayed"/>
    </isoform>
    <isoform>
        <id>Q9CZP7-2</id>
        <name>2</name>
        <sequence type="described" ref="VSP_031215 VSP_031216"/>
    </isoform>
    <isoform>
        <id>Q9CZP7-3</id>
        <name>3</name>
        <sequence type="described" ref="VSP_031214 VSP_031217"/>
    </isoform>
    <isoform>
        <id>Q9CZP7-4</id>
        <name>4</name>
        <sequence type="described" ref="VSP_031213 VSP_031218"/>
    </isoform>
</comment>
<comment type="similarity">
    <text evidence="6">Belongs to the CDC37 family.</text>
</comment>
<accession>Q9CZP7</accession>
<accession>Q3TNC7</accession>
<accession>Q8BP15</accession>
<accession>Q8C892</accession>
<accession>Q8C8X2</accession>
<accession>Q9CU15</accession>
<reference key="1">
    <citation type="journal article" date="2005" name="Science">
        <title>The transcriptional landscape of the mammalian genome.</title>
        <authorList>
            <person name="Carninci P."/>
            <person name="Kasukawa T."/>
            <person name="Katayama S."/>
            <person name="Gough J."/>
            <person name="Frith M.C."/>
            <person name="Maeda N."/>
            <person name="Oyama R."/>
            <person name="Ravasi T."/>
            <person name="Lenhard B."/>
            <person name="Wells C."/>
            <person name="Kodzius R."/>
            <person name="Shimokawa K."/>
            <person name="Bajic V.B."/>
            <person name="Brenner S.E."/>
            <person name="Batalov S."/>
            <person name="Forrest A.R."/>
            <person name="Zavolan M."/>
            <person name="Davis M.J."/>
            <person name="Wilming L.G."/>
            <person name="Aidinis V."/>
            <person name="Allen J.E."/>
            <person name="Ambesi-Impiombato A."/>
            <person name="Apweiler R."/>
            <person name="Aturaliya R.N."/>
            <person name="Bailey T.L."/>
            <person name="Bansal M."/>
            <person name="Baxter L."/>
            <person name="Beisel K.W."/>
            <person name="Bersano T."/>
            <person name="Bono H."/>
            <person name="Chalk A.M."/>
            <person name="Chiu K.P."/>
            <person name="Choudhary V."/>
            <person name="Christoffels A."/>
            <person name="Clutterbuck D.R."/>
            <person name="Crowe M.L."/>
            <person name="Dalla E."/>
            <person name="Dalrymple B.P."/>
            <person name="de Bono B."/>
            <person name="Della Gatta G."/>
            <person name="di Bernardo D."/>
            <person name="Down T."/>
            <person name="Engstrom P."/>
            <person name="Fagiolini M."/>
            <person name="Faulkner G."/>
            <person name="Fletcher C.F."/>
            <person name="Fukushima T."/>
            <person name="Furuno M."/>
            <person name="Futaki S."/>
            <person name="Gariboldi M."/>
            <person name="Georgii-Hemming P."/>
            <person name="Gingeras T.R."/>
            <person name="Gojobori T."/>
            <person name="Green R.E."/>
            <person name="Gustincich S."/>
            <person name="Harbers M."/>
            <person name="Hayashi Y."/>
            <person name="Hensch T.K."/>
            <person name="Hirokawa N."/>
            <person name="Hill D."/>
            <person name="Huminiecki L."/>
            <person name="Iacono M."/>
            <person name="Ikeo K."/>
            <person name="Iwama A."/>
            <person name="Ishikawa T."/>
            <person name="Jakt M."/>
            <person name="Kanapin A."/>
            <person name="Katoh M."/>
            <person name="Kawasawa Y."/>
            <person name="Kelso J."/>
            <person name="Kitamura H."/>
            <person name="Kitano H."/>
            <person name="Kollias G."/>
            <person name="Krishnan S.P."/>
            <person name="Kruger A."/>
            <person name="Kummerfeld S.K."/>
            <person name="Kurochkin I.V."/>
            <person name="Lareau L.F."/>
            <person name="Lazarevic D."/>
            <person name="Lipovich L."/>
            <person name="Liu J."/>
            <person name="Liuni S."/>
            <person name="McWilliam S."/>
            <person name="Madan Babu M."/>
            <person name="Madera M."/>
            <person name="Marchionni L."/>
            <person name="Matsuda H."/>
            <person name="Matsuzawa S."/>
            <person name="Miki H."/>
            <person name="Mignone F."/>
            <person name="Miyake S."/>
            <person name="Morris K."/>
            <person name="Mottagui-Tabar S."/>
            <person name="Mulder N."/>
            <person name="Nakano N."/>
            <person name="Nakauchi H."/>
            <person name="Ng P."/>
            <person name="Nilsson R."/>
            <person name="Nishiguchi S."/>
            <person name="Nishikawa S."/>
            <person name="Nori F."/>
            <person name="Ohara O."/>
            <person name="Okazaki Y."/>
            <person name="Orlando V."/>
            <person name="Pang K.C."/>
            <person name="Pavan W.J."/>
            <person name="Pavesi G."/>
            <person name="Pesole G."/>
            <person name="Petrovsky N."/>
            <person name="Piazza S."/>
            <person name="Reed J."/>
            <person name="Reid J.F."/>
            <person name="Ring B.Z."/>
            <person name="Ringwald M."/>
            <person name="Rost B."/>
            <person name="Ruan Y."/>
            <person name="Salzberg S.L."/>
            <person name="Sandelin A."/>
            <person name="Schneider C."/>
            <person name="Schoenbach C."/>
            <person name="Sekiguchi K."/>
            <person name="Semple C.A."/>
            <person name="Seno S."/>
            <person name="Sessa L."/>
            <person name="Sheng Y."/>
            <person name="Shibata Y."/>
            <person name="Shimada H."/>
            <person name="Shimada K."/>
            <person name="Silva D."/>
            <person name="Sinclair B."/>
            <person name="Sperling S."/>
            <person name="Stupka E."/>
            <person name="Sugiura K."/>
            <person name="Sultana R."/>
            <person name="Takenaka Y."/>
            <person name="Taki K."/>
            <person name="Tammoja K."/>
            <person name="Tan S.L."/>
            <person name="Tang S."/>
            <person name="Taylor M.S."/>
            <person name="Tegner J."/>
            <person name="Teichmann S.A."/>
            <person name="Ueda H.R."/>
            <person name="van Nimwegen E."/>
            <person name="Verardo R."/>
            <person name="Wei C.L."/>
            <person name="Yagi K."/>
            <person name="Yamanishi H."/>
            <person name="Zabarovsky E."/>
            <person name="Zhu S."/>
            <person name="Zimmer A."/>
            <person name="Hide W."/>
            <person name="Bult C."/>
            <person name="Grimmond S.M."/>
            <person name="Teasdale R.D."/>
            <person name="Liu E.T."/>
            <person name="Brusic V."/>
            <person name="Quackenbush J."/>
            <person name="Wahlestedt C."/>
            <person name="Mattick J.S."/>
            <person name="Hume D.A."/>
            <person name="Kai C."/>
            <person name="Sasaki D."/>
            <person name="Tomaru Y."/>
            <person name="Fukuda S."/>
            <person name="Kanamori-Katayama M."/>
            <person name="Suzuki M."/>
            <person name="Aoki J."/>
            <person name="Arakawa T."/>
            <person name="Iida J."/>
            <person name="Imamura K."/>
            <person name="Itoh M."/>
            <person name="Kato T."/>
            <person name="Kawaji H."/>
            <person name="Kawagashira N."/>
            <person name="Kawashima T."/>
            <person name="Kojima M."/>
            <person name="Kondo S."/>
            <person name="Konno H."/>
            <person name="Nakano K."/>
            <person name="Ninomiya N."/>
            <person name="Nishio T."/>
            <person name="Okada M."/>
            <person name="Plessy C."/>
            <person name="Shibata K."/>
            <person name="Shiraki T."/>
            <person name="Suzuki S."/>
            <person name="Tagami M."/>
            <person name="Waki K."/>
            <person name="Watahiki A."/>
            <person name="Okamura-Oho Y."/>
            <person name="Suzuki H."/>
            <person name="Kawai J."/>
            <person name="Hayashizaki Y."/>
        </authorList>
    </citation>
    <scope>NUCLEOTIDE SEQUENCE [LARGE SCALE MRNA] (ISOFORMS 1; 2; 3 AND 4)</scope>
    <source>
        <strain>C57BL/6J</strain>
        <tissue>Cerebellum</tissue>
        <tissue>Embryo</tissue>
        <tissue>Head</tissue>
        <tissue>Hypothalamus</tissue>
        <tissue>Kidney</tissue>
        <tissue>Muellerian duct</tissue>
        <tissue>Retina</tissue>
    </source>
</reference>
<reference key="2">
    <citation type="journal article" date="2004" name="Genome Res.">
        <title>The status, quality, and expansion of the NIH full-length cDNA project: the Mammalian Gene Collection (MGC).</title>
        <authorList>
            <consortium name="The MGC Project Team"/>
        </authorList>
    </citation>
    <scope>NUCLEOTIDE SEQUENCE [LARGE SCALE MRNA] (ISOFORM 1)</scope>
    <source>
        <strain>FVB/N</strain>
        <tissue>Kidney</tissue>
    </source>
</reference>
<reference key="3">
    <citation type="journal article" date="2010" name="Cell">
        <title>A tissue-specific atlas of mouse protein phosphorylation and expression.</title>
        <authorList>
            <person name="Huttlin E.L."/>
            <person name="Jedrychowski M.P."/>
            <person name="Elias J.E."/>
            <person name="Goswami T."/>
            <person name="Rad R."/>
            <person name="Beausoleil S.A."/>
            <person name="Villen J."/>
            <person name="Haas W."/>
            <person name="Sowa M.E."/>
            <person name="Gygi S.P."/>
        </authorList>
    </citation>
    <scope>IDENTIFICATION BY MASS SPECTROMETRY [LARGE SCALE ANALYSIS]</scope>
    <source>
        <tissue>Brain</tissue>
        <tissue>Heart</tissue>
        <tissue>Testis</tissue>
    </source>
</reference>
<sequence length="335" mass="38439">MEQPWPPPGPWSFPRTGGETEEESDLDVSPSSSHYSPVPDGGAQMYSHGIELACQKQKEFVKSSVACKWNLAEAQQKLGSLALHNSESLDQEHAKAQTAVSELRQREEEWRQKEEALVQRERMCLWNMDAISKDVFNKSFINQDKRKTEEEDKSQSFMQKYEQKIRHFGMLSRWDDSQRFLSDHPHLVCEETAKYLILWCFHLEAEQKGALMEQIAHQAVVMQFIMEMAKNCNVDPRGCFRLFFQKAKAEEEGYFEAFKNELEAFKSRVRLYAQSQSLQPVTVQNHVPHSGVGCIGSLESLPQNPDSLQCCTPAPLCSVDSVVHKEDDDRMMDTV</sequence>
<keyword id="KW-0025">Alternative splicing</keyword>
<keyword id="KW-0143">Chaperone</keyword>
<keyword id="KW-0175">Coiled coil</keyword>
<keyword id="KW-0963">Cytoplasm</keyword>
<keyword id="KW-0597">Phosphoprotein</keyword>
<keyword id="KW-1185">Reference proteome</keyword>
<evidence type="ECO:0000250" key="1"/>
<evidence type="ECO:0000250" key="2">
    <source>
        <dbReference type="UniProtKB" id="Q7L3B6"/>
    </source>
</evidence>
<evidence type="ECO:0000255" key="3"/>
<evidence type="ECO:0000256" key="4">
    <source>
        <dbReference type="SAM" id="MobiDB-lite"/>
    </source>
</evidence>
<evidence type="ECO:0000303" key="5">
    <source>
    </source>
</evidence>
<evidence type="ECO:0000305" key="6"/>
<organism>
    <name type="scientific">Mus musculus</name>
    <name type="common">Mouse</name>
    <dbReference type="NCBI Taxonomy" id="10090"/>
    <lineage>
        <taxon>Eukaryota</taxon>
        <taxon>Metazoa</taxon>
        <taxon>Chordata</taxon>
        <taxon>Craniata</taxon>
        <taxon>Vertebrata</taxon>
        <taxon>Euteleostomi</taxon>
        <taxon>Mammalia</taxon>
        <taxon>Eutheria</taxon>
        <taxon>Euarchontoglires</taxon>
        <taxon>Glires</taxon>
        <taxon>Rodentia</taxon>
        <taxon>Myomorpha</taxon>
        <taxon>Muroidea</taxon>
        <taxon>Muridae</taxon>
        <taxon>Murinae</taxon>
        <taxon>Mus</taxon>
        <taxon>Mus</taxon>
    </lineage>
</organism>